<proteinExistence type="inferred from homology"/>
<evidence type="ECO:0000255" key="1">
    <source>
        <dbReference type="HAMAP-Rule" id="MF_00600"/>
    </source>
</evidence>
<name>CH60_BACFN</name>
<keyword id="KW-0067">ATP-binding</keyword>
<keyword id="KW-0143">Chaperone</keyword>
<keyword id="KW-0963">Cytoplasm</keyword>
<keyword id="KW-0413">Isomerase</keyword>
<keyword id="KW-0547">Nucleotide-binding</keyword>
<protein>
    <recommendedName>
        <fullName evidence="1">Chaperonin GroEL</fullName>
        <ecNumber evidence="1">5.6.1.7</ecNumber>
    </recommendedName>
    <alternativeName>
        <fullName evidence="1">60 kDa chaperonin</fullName>
    </alternativeName>
    <alternativeName>
        <fullName evidence="1">Chaperonin-60</fullName>
        <shortName evidence="1">Cpn60</shortName>
    </alternativeName>
</protein>
<dbReference type="EC" id="5.6.1.7" evidence="1"/>
<dbReference type="EMBL" id="CR626927">
    <property type="protein sequence ID" value="CAH08917.1"/>
    <property type="molecule type" value="Genomic_DNA"/>
</dbReference>
<dbReference type="RefSeq" id="WP_005789739.1">
    <property type="nucleotide sequence ID" value="NZ_UFTH01000001.1"/>
</dbReference>
<dbReference type="SMR" id="Q5LAF6"/>
<dbReference type="PaxDb" id="272559-BF9343_3136"/>
<dbReference type="GeneID" id="60366580"/>
<dbReference type="KEGG" id="bfs:BF9343_3136"/>
<dbReference type="eggNOG" id="COG0459">
    <property type="taxonomic scope" value="Bacteria"/>
</dbReference>
<dbReference type="HOGENOM" id="CLU_016503_3_0_10"/>
<dbReference type="Proteomes" id="UP000006731">
    <property type="component" value="Chromosome"/>
</dbReference>
<dbReference type="GO" id="GO:0005737">
    <property type="term" value="C:cytoplasm"/>
    <property type="evidence" value="ECO:0007669"/>
    <property type="project" value="UniProtKB-SubCell"/>
</dbReference>
<dbReference type="GO" id="GO:0005524">
    <property type="term" value="F:ATP binding"/>
    <property type="evidence" value="ECO:0007669"/>
    <property type="project" value="UniProtKB-UniRule"/>
</dbReference>
<dbReference type="GO" id="GO:0140662">
    <property type="term" value="F:ATP-dependent protein folding chaperone"/>
    <property type="evidence" value="ECO:0007669"/>
    <property type="project" value="InterPro"/>
</dbReference>
<dbReference type="GO" id="GO:0016853">
    <property type="term" value="F:isomerase activity"/>
    <property type="evidence" value="ECO:0007669"/>
    <property type="project" value="UniProtKB-KW"/>
</dbReference>
<dbReference type="GO" id="GO:0051082">
    <property type="term" value="F:unfolded protein binding"/>
    <property type="evidence" value="ECO:0007669"/>
    <property type="project" value="UniProtKB-UniRule"/>
</dbReference>
<dbReference type="GO" id="GO:0042026">
    <property type="term" value="P:protein refolding"/>
    <property type="evidence" value="ECO:0007669"/>
    <property type="project" value="UniProtKB-UniRule"/>
</dbReference>
<dbReference type="CDD" id="cd03344">
    <property type="entry name" value="GroEL"/>
    <property type="match status" value="1"/>
</dbReference>
<dbReference type="FunFam" id="3.50.7.10:FF:000001">
    <property type="entry name" value="60 kDa chaperonin"/>
    <property type="match status" value="1"/>
</dbReference>
<dbReference type="Gene3D" id="3.50.7.10">
    <property type="entry name" value="GroEL"/>
    <property type="match status" value="1"/>
</dbReference>
<dbReference type="Gene3D" id="1.10.560.10">
    <property type="entry name" value="GroEL-like equatorial domain"/>
    <property type="match status" value="1"/>
</dbReference>
<dbReference type="Gene3D" id="3.30.260.10">
    <property type="entry name" value="TCP-1-like chaperonin intermediate domain"/>
    <property type="match status" value="1"/>
</dbReference>
<dbReference type="HAMAP" id="MF_00600">
    <property type="entry name" value="CH60"/>
    <property type="match status" value="1"/>
</dbReference>
<dbReference type="InterPro" id="IPR018370">
    <property type="entry name" value="Chaperonin_Cpn60_CS"/>
</dbReference>
<dbReference type="InterPro" id="IPR001844">
    <property type="entry name" value="Cpn60/GroEL"/>
</dbReference>
<dbReference type="InterPro" id="IPR002423">
    <property type="entry name" value="Cpn60/GroEL/TCP-1"/>
</dbReference>
<dbReference type="InterPro" id="IPR027409">
    <property type="entry name" value="GroEL-like_apical_dom_sf"/>
</dbReference>
<dbReference type="InterPro" id="IPR027413">
    <property type="entry name" value="GROEL-like_equatorial_sf"/>
</dbReference>
<dbReference type="InterPro" id="IPR027410">
    <property type="entry name" value="TCP-1-like_intermed_sf"/>
</dbReference>
<dbReference type="NCBIfam" id="TIGR02348">
    <property type="entry name" value="GroEL"/>
    <property type="match status" value="1"/>
</dbReference>
<dbReference type="NCBIfam" id="NF000592">
    <property type="entry name" value="PRK00013.1"/>
    <property type="match status" value="1"/>
</dbReference>
<dbReference type="NCBIfam" id="NF009487">
    <property type="entry name" value="PRK12849.1"/>
    <property type="match status" value="1"/>
</dbReference>
<dbReference type="NCBIfam" id="NF009488">
    <property type="entry name" value="PRK12850.1"/>
    <property type="match status" value="1"/>
</dbReference>
<dbReference type="NCBIfam" id="NF009489">
    <property type="entry name" value="PRK12851.1"/>
    <property type="match status" value="1"/>
</dbReference>
<dbReference type="PANTHER" id="PTHR45633">
    <property type="entry name" value="60 KDA HEAT SHOCK PROTEIN, MITOCHONDRIAL"/>
    <property type="match status" value="1"/>
</dbReference>
<dbReference type="Pfam" id="PF00118">
    <property type="entry name" value="Cpn60_TCP1"/>
    <property type="match status" value="1"/>
</dbReference>
<dbReference type="PRINTS" id="PR00298">
    <property type="entry name" value="CHAPERONIN60"/>
</dbReference>
<dbReference type="SUPFAM" id="SSF52029">
    <property type="entry name" value="GroEL apical domain-like"/>
    <property type="match status" value="1"/>
</dbReference>
<dbReference type="SUPFAM" id="SSF48592">
    <property type="entry name" value="GroEL equatorial domain-like"/>
    <property type="match status" value="1"/>
</dbReference>
<dbReference type="SUPFAM" id="SSF54849">
    <property type="entry name" value="GroEL-intermediate domain like"/>
    <property type="match status" value="1"/>
</dbReference>
<dbReference type="PROSITE" id="PS00296">
    <property type="entry name" value="CHAPERONINS_CPN60"/>
    <property type="match status" value="1"/>
</dbReference>
<comment type="function">
    <text evidence="1">Together with its co-chaperonin GroES, plays an essential role in assisting protein folding. The GroEL-GroES system forms a nano-cage that allows encapsulation of the non-native substrate proteins and provides a physical environment optimized to promote and accelerate protein folding.</text>
</comment>
<comment type="catalytic activity">
    <reaction evidence="1">
        <text>ATP + H2O + a folded polypeptide = ADP + phosphate + an unfolded polypeptide.</text>
        <dbReference type="EC" id="5.6.1.7"/>
    </reaction>
</comment>
<comment type="subunit">
    <text evidence="1">Forms a cylinder of 14 subunits composed of two heptameric rings stacked back-to-back. Interacts with the co-chaperonin GroES.</text>
</comment>
<comment type="subcellular location">
    <subcellularLocation>
        <location evidence="1">Cytoplasm</location>
    </subcellularLocation>
</comment>
<comment type="similarity">
    <text evidence="1">Belongs to the chaperonin (HSP60) family.</text>
</comment>
<feature type="chain" id="PRO_0000256874" description="Chaperonin GroEL">
    <location>
        <begin position="1"/>
        <end position="545"/>
    </location>
</feature>
<feature type="binding site" evidence="1">
    <location>
        <begin position="29"/>
        <end position="32"/>
    </location>
    <ligand>
        <name>ATP</name>
        <dbReference type="ChEBI" id="CHEBI:30616"/>
    </ligand>
</feature>
<feature type="binding site" evidence="1">
    <location>
        <position position="50"/>
    </location>
    <ligand>
        <name>ATP</name>
        <dbReference type="ChEBI" id="CHEBI:30616"/>
    </ligand>
</feature>
<feature type="binding site" evidence="1">
    <location>
        <begin position="86"/>
        <end position="90"/>
    </location>
    <ligand>
        <name>ATP</name>
        <dbReference type="ChEBI" id="CHEBI:30616"/>
    </ligand>
</feature>
<feature type="binding site" evidence="1">
    <location>
        <position position="415"/>
    </location>
    <ligand>
        <name>ATP</name>
        <dbReference type="ChEBI" id="CHEBI:30616"/>
    </ligand>
</feature>
<feature type="binding site" evidence="1">
    <location>
        <position position="495"/>
    </location>
    <ligand>
        <name>ATP</name>
        <dbReference type="ChEBI" id="CHEBI:30616"/>
    </ligand>
</feature>
<organism>
    <name type="scientific">Bacteroides fragilis (strain ATCC 25285 / DSM 2151 / CCUG 4856 / JCM 11019 / LMG 10263 / NCTC 9343 / Onslow / VPI 2553 / EN-2)</name>
    <dbReference type="NCBI Taxonomy" id="272559"/>
    <lineage>
        <taxon>Bacteria</taxon>
        <taxon>Pseudomonadati</taxon>
        <taxon>Bacteroidota</taxon>
        <taxon>Bacteroidia</taxon>
        <taxon>Bacteroidales</taxon>
        <taxon>Bacteroidaceae</taxon>
        <taxon>Bacteroides</taxon>
    </lineage>
</organism>
<reference key="1">
    <citation type="journal article" date="2005" name="Science">
        <title>Extensive DNA inversions in the B. fragilis genome control variable gene expression.</title>
        <authorList>
            <person name="Cerdeno-Tarraga A.-M."/>
            <person name="Patrick S."/>
            <person name="Crossman L.C."/>
            <person name="Blakely G."/>
            <person name="Abratt V."/>
            <person name="Lennard N."/>
            <person name="Poxton I."/>
            <person name="Duerden B."/>
            <person name="Harris B."/>
            <person name="Quail M.A."/>
            <person name="Barron A."/>
            <person name="Clark L."/>
            <person name="Corton C."/>
            <person name="Doggett J."/>
            <person name="Holden M.T.G."/>
            <person name="Larke N."/>
            <person name="Line A."/>
            <person name="Lord A."/>
            <person name="Norbertczak H."/>
            <person name="Ormond D."/>
            <person name="Price C."/>
            <person name="Rabbinowitsch E."/>
            <person name="Woodward J."/>
            <person name="Barrell B.G."/>
            <person name="Parkhill J."/>
        </authorList>
    </citation>
    <scope>NUCLEOTIDE SEQUENCE [LARGE SCALE GENOMIC DNA]</scope>
    <source>
        <strain>ATCC 25285 / DSM 2151 / CCUG 4856 / JCM 11019 / LMG 10263 / NCTC 9343 / Onslow / VPI 2553 / EN-2</strain>
    </source>
</reference>
<accession>Q5LAF6</accession>
<gene>
    <name evidence="1" type="primary">groEL</name>
    <name evidence="1" type="synonym">groL</name>
    <name type="ordered locus">BF3222</name>
</gene>
<sequence length="545" mass="58199">MAKEILFNIEARDQLKKGVDALANAVKVTLGPKGRNVIIEKKFGAPHITKDGVTVAKEIELTDAYQNTGAQLVKEVASKTGDDAGDGTTTATVLAQAIIAEGLKNVTAGASPMDIKRGIDKAVAKVVDSIKHQAEKVGDNYDKIEQVATVSANNDPVIGKLIADAMRKVSKDGVITIEEAKGTDTTIGVVEGMQFDRGYLSAYFVTNTEKMECEMEKPYILIYDKKISNLKDFLPILEPAVQSGRPLLVIAEDVDSEALTTLVVNRLRSQLKICAVKAPGFGDRRKEMLEDIAVLTGGVVISEEKGLKLEQATIEMLGTADKVTVSKDNTTIVNGAGAKENIKERCDQIKAQIAATKSDYDREKLQERLAKLSGGVAVLYVGAASEVEMKEKKDRVDDALRATRAAIEEGIVAGGGVAYIRAIESLDGLKGENDDETTGIAIIKRAIEEPLRQIVANAGKEGAVVVQKVSEGKGDFGYNARTDVYENMHAAGVVDPAKVTRVALENAASIAGMFLTTECVIVEKKEDKPEMPMGAPGMGGMGGMM</sequence>